<evidence type="ECO:0000255" key="1">
    <source>
        <dbReference type="HAMAP-Rule" id="MF_00501"/>
    </source>
</evidence>
<evidence type="ECO:0000305" key="2"/>
<name>RL31_MYXXD</name>
<comment type="function">
    <text evidence="1">Binds the 23S rRNA.</text>
</comment>
<comment type="cofactor">
    <cofactor evidence="1">
        <name>Zn(2+)</name>
        <dbReference type="ChEBI" id="CHEBI:29105"/>
    </cofactor>
    <text evidence="1">Binds 1 zinc ion per subunit.</text>
</comment>
<comment type="subunit">
    <text evidence="1">Part of the 50S ribosomal subunit.</text>
</comment>
<comment type="similarity">
    <text evidence="1">Belongs to the bacterial ribosomal protein bL31 family. Type A subfamily.</text>
</comment>
<sequence length="73" mass="8113">MKPEIHPVYPPSRVTCMCGNVVETKSTRGSFSVEICSNCHPFFTGKYKLVDTAGRIDRFRKKYGASPTSAKKA</sequence>
<dbReference type="EMBL" id="CP000113">
    <property type="protein sequence ID" value="ABF91803.1"/>
    <property type="molecule type" value="Genomic_DNA"/>
</dbReference>
<dbReference type="RefSeq" id="WP_011555112.1">
    <property type="nucleotide sequence ID" value="NC_008095.1"/>
</dbReference>
<dbReference type="STRING" id="246197.MXAN_5139"/>
<dbReference type="EnsemblBacteria" id="ABF91803">
    <property type="protein sequence ID" value="ABF91803"/>
    <property type="gene ID" value="MXAN_5139"/>
</dbReference>
<dbReference type="GeneID" id="41362423"/>
<dbReference type="KEGG" id="mxa:MXAN_5139"/>
<dbReference type="eggNOG" id="COG0254">
    <property type="taxonomic scope" value="Bacteria"/>
</dbReference>
<dbReference type="HOGENOM" id="CLU_114306_4_3_7"/>
<dbReference type="OrthoDB" id="9803251at2"/>
<dbReference type="Proteomes" id="UP000002402">
    <property type="component" value="Chromosome"/>
</dbReference>
<dbReference type="GO" id="GO:1990904">
    <property type="term" value="C:ribonucleoprotein complex"/>
    <property type="evidence" value="ECO:0007669"/>
    <property type="project" value="UniProtKB-KW"/>
</dbReference>
<dbReference type="GO" id="GO:0005840">
    <property type="term" value="C:ribosome"/>
    <property type="evidence" value="ECO:0007669"/>
    <property type="project" value="UniProtKB-KW"/>
</dbReference>
<dbReference type="GO" id="GO:0046872">
    <property type="term" value="F:metal ion binding"/>
    <property type="evidence" value="ECO:0007669"/>
    <property type="project" value="UniProtKB-KW"/>
</dbReference>
<dbReference type="GO" id="GO:0019843">
    <property type="term" value="F:rRNA binding"/>
    <property type="evidence" value="ECO:0007669"/>
    <property type="project" value="UniProtKB-KW"/>
</dbReference>
<dbReference type="GO" id="GO:0003735">
    <property type="term" value="F:structural constituent of ribosome"/>
    <property type="evidence" value="ECO:0007669"/>
    <property type="project" value="InterPro"/>
</dbReference>
<dbReference type="GO" id="GO:0006412">
    <property type="term" value="P:translation"/>
    <property type="evidence" value="ECO:0007669"/>
    <property type="project" value="UniProtKB-UniRule"/>
</dbReference>
<dbReference type="Gene3D" id="4.10.830.30">
    <property type="entry name" value="Ribosomal protein L31"/>
    <property type="match status" value="1"/>
</dbReference>
<dbReference type="HAMAP" id="MF_00501">
    <property type="entry name" value="Ribosomal_bL31_1"/>
    <property type="match status" value="1"/>
</dbReference>
<dbReference type="InterPro" id="IPR034704">
    <property type="entry name" value="Ribosomal_bL28/bL31-like_sf"/>
</dbReference>
<dbReference type="InterPro" id="IPR002150">
    <property type="entry name" value="Ribosomal_bL31"/>
</dbReference>
<dbReference type="InterPro" id="IPR027491">
    <property type="entry name" value="Ribosomal_bL31_A"/>
</dbReference>
<dbReference type="InterPro" id="IPR042105">
    <property type="entry name" value="Ribosomal_bL31_sf"/>
</dbReference>
<dbReference type="NCBIfam" id="TIGR00105">
    <property type="entry name" value="L31"/>
    <property type="match status" value="1"/>
</dbReference>
<dbReference type="NCBIfam" id="NF000612">
    <property type="entry name" value="PRK00019.1"/>
    <property type="match status" value="1"/>
</dbReference>
<dbReference type="PANTHER" id="PTHR33280">
    <property type="entry name" value="50S RIBOSOMAL PROTEIN L31, CHLOROPLASTIC"/>
    <property type="match status" value="1"/>
</dbReference>
<dbReference type="PANTHER" id="PTHR33280:SF1">
    <property type="entry name" value="LARGE RIBOSOMAL SUBUNIT PROTEIN BL31C"/>
    <property type="match status" value="1"/>
</dbReference>
<dbReference type="Pfam" id="PF01197">
    <property type="entry name" value="Ribosomal_L31"/>
    <property type="match status" value="1"/>
</dbReference>
<dbReference type="PRINTS" id="PR01249">
    <property type="entry name" value="RIBOSOMALL31"/>
</dbReference>
<dbReference type="SUPFAM" id="SSF143800">
    <property type="entry name" value="L28p-like"/>
    <property type="match status" value="1"/>
</dbReference>
<dbReference type="PROSITE" id="PS01143">
    <property type="entry name" value="RIBOSOMAL_L31"/>
    <property type="match status" value="1"/>
</dbReference>
<proteinExistence type="inferred from homology"/>
<accession>Q1D230</accession>
<feature type="chain" id="PRO_0000259198" description="Large ribosomal subunit protein bL31">
    <location>
        <begin position="1"/>
        <end position="73"/>
    </location>
</feature>
<feature type="binding site" evidence="1">
    <location>
        <position position="16"/>
    </location>
    <ligand>
        <name>Zn(2+)</name>
        <dbReference type="ChEBI" id="CHEBI:29105"/>
    </ligand>
</feature>
<feature type="binding site" evidence="1">
    <location>
        <position position="18"/>
    </location>
    <ligand>
        <name>Zn(2+)</name>
        <dbReference type="ChEBI" id="CHEBI:29105"/>
    </ligand>
</feature>
<feature type="binding site" evidence="1">
    <location>
        <position position="36"/>
    </location>
    <ligand>
        <name>Zn(2+)</name>
        <dbReference type="ChEBI" id="CHEBI:29105"/>
    </ligand>
</feature>
<feature type="binding site" evidence="1">
    <location>
        <position position="39"/>
    </location>
    <ligand>
        <name>Zn(2+)</name>
        <dbReference type="ChEBI" id="CHEBI:29105"/>
    </ligand>
</feature>
<reference key="1">
    <citation type="journal article" date="2006" name="Proc. Natl. Acad. Sci. U.S.A.">
        <title>Evolution of sensory complexity recorded in a myxobacterial genome.</title>
        <authorList>
            <person name="Goldman B.S."/>
            <person name="Nierman W.C."/>
            <person name="Kaiser D."/>
            <person name="Slater S.C."/>
            <person name="Durkin A.S."/>
            <person name="Eisen J.A."/>
            <person name="Ronning C.M."/>
            <person name="Barbazuk W.B."/>
            <person name="Blanchard M."/>
            <person name="Field C."/>
            <person name="Halling C."/>
            <person name="Hinkle G."/>
            <person name="Iartchuk O."/>
            <person name="Kim H.S."/>
            <person name="Mackenzie C."/>
            <person name="Madupu R."/>
            <person name="Miller N."/>
            <person name="Shvartsbeyn A."/>
            <person name="Sullivan S.A."/>
            <person name="Vaudin M."/>
            <person name="Wiegand R."/>
            <person name="Kaplan H.B."/>
        </authorList>
    </citation>
    <scope>NUCLEOTIDE SEQUENCE [LARGE SCALE GENOMIC DNA]</scope>
    <source>
        <strain>DK1622</strain>
    </source>
</reference>
<gene>
    <name evidence="1" type="primary">rpmE</name>
    <name type="ordered locus">MXAN_5139</name>
</gene>
<organism>
    <name type="scientific">Myxococcus xanthus (strain DK1622)</name>
    <dbReference type="NCBI Taxonomy" id="246197"/>
    <lineage>
        <taxon>Bacteria</taxon>
        <taxon>Pseudomonadati</taxon>
        <taxon>Myxococcota</taxon>
        <taxon>Myxococcia</taxon>
        <taxon>Myxococcales</taxon>
        <taxon>Cystobacterineae</taxon>
        <taxon>Myxococcaceae</taxon>
        <taxon>Myxococcus</taxon>
    </lineage>
</organism>
<protein>
    <recommendedName>
        <fullName evidence="1">Large ribosomal subunit protein bL31</fullName>
    </recommendedName>
    <alternativeName>
        <fullName evidence="2">50S ribosomal protein L31</fullName>
    </alternativeName>
</protein>
<keyword id="KW-0479">Metal-binding</keyword>
<keyword id="KW-1185">Reference proteome</keyword>
<keyword id="KW-0687">Ribonucleoprotein</keyword>
<keyword id="KW-0689">Ribosomal protein</keyword>
<keyword id="KW-0694">RNA-binding</keyword>
<keyword id="KW-0699">rRNA-binding</keyword>
<keyword id="KW-0862">Zinc</keyword>